<comment type="subcellular location">
    <subcellularLocation>
        <location>Secreted</location>
    </subcellularLocation>
</comment>
<comment type="tissue specificity">
    <text>Plasma.</text>
</comment>
<comment type="domain">
    <text evidence="1">The reactive center loop (RCL) extends out from the body of the protein and directs binding to the target protease. The protease cleaves the serpin at the reactive site within the RCL, establishing a covalent linkage between the serpin reactive site and the active site of the protease. The resulting inactive serpin-protease complex is highly stable (By similarity).</text>
</comment>
<comment type="PTM">
    <text evidence="3">N-glycosylated; contains bi- and triantennary glycans with a bisecting N-acetylglucosamine and fucose residue.</text>
</comment>
<comment type="similarity">
    <text evidence="4">Belongs to the serpin family.</text>
</comment>
<name>A1AT_NOTEU</name>
<dbReference type="MEROPS" id="I04.974"/>
<dbReference type="GO" id="GO:0005576">
    <property type="term" value="C:extracellular region"/>
    <property type="evidence" value="ECO:0007669"/>
    <property type="project" value="UniProtKB-SubCell"/>
</dbReference>
<dbReference type="GO" id="GO:0004867">
    <property type="term" value="F:serine-type endopeptidase inhibitor activity"/>
    <property type="evidence" value="ECO:0007669"/>
    <property type="project" value="UniProtKB-KW"/>
</dbReference>
<dbReference type="GO" id="GO:0006953">
    <property type="term" value="P:acute-phase response"/>
    <property type="evidence" value="ECO:0007669"/>
    <property type="project" value="UniProtKB-KW"/>
</dbReference>
<dbReference type="Gene3D" id="2.10.310.10">
    <property type="entry name" value="Serpins superfamily"/>
    <property type="match status" value="1"/>
</dbReference>
<dbReference type="PROSITE" id="PS00284">
    <property type="entry name" value="SERPIN"/>
    <property type="match status" value="1"/>
</dbReference>
<keyword id="KW-0011">Acute phase</keyword>
<keyword id="KW-0903">Direct protein sequencing</keyword>
<keyword id="KW-0325">Glycoprotein</keyword>
<keyword id="KW-0597">Phosphoprotein</keyword>
<keyword id="KW-0646">Protease inhibitor</keyword>
<keyword id="KW-0964">Secreted</keyword>
<keyword id="KW-0722">Serine protease inhibitor</keyword>
<reference key="1">
    <citation type="journal article" date="1991" name="Comp. Biochem. Physiol.">
        <title>The tammar wallaby major plasma serpin: partial characterization including the sequence of the reactive site region.</title>
        <authorList>
            <person name="Patterson S.D."/>
            <person name="Bell K."/>
            <person name="Shaw D.C."/>
        </authorList>
    </citation>
    <scope>PROTEIN SEQUENCE</scope>
    <source>
        <tissue>Plasma</tissue>
    </source>
</reference>
<reference key="2">
    <citation type="journal article" date="1990" name="Biochem. Int.">
        <title>The carbohydrate side chains of the major plasma serpins of horse and wallaby: analyses of enzymatic and chemically treated (including 'Smith degradation') protein blots by lectin binding.</title>
        <authorList>
            <person name="Patterson S.D."/>
            <person name="Bell K."/>
        </authorList>
    </citation>
    <scope>GLYCOSYLATION</scope>
</reference>
<proteinExistence type="evidence at protein level"/>
<feature type="chain" id="PRO_0000094095" description="Alpha-1-antiproteinase">
    <location>
        <begin position="1"/>
        <end position="46" status="greater than"/>
    </location>
</feature>
<feature type="site" description="Reactive bond">
    <location>
        <begin position="29"/>
        <end position="30"/>
    </location>
</feature>
<feature type="modified residue" description="Phosphoserine" evidence="2">
    <location>
        <position position="30"/>
    </location>
</feature>
<feature type="non-consecutive residues" evidence="4">
    <location>
        <begin position="24"/>
        <end position="25"/>
    </location>
</feature>
<feature type="non-terminal residue">
    <location>
        <position position="46"/>
    </location>
</feature>
<sequence length="46" mass="5197">EELPDSKDRAXPLSASKXISPYMKEAIPMSIPPVIDFNKPFLIIXY</sequence>
<organism>
    <name type="scientific">Notamacropus eugenii</name>
    <name type="common">Tammar wallaby</name>
    <name type="synonym">Macropus eugenii</name>
    <dbReference type="NCBI Taxonomy" id="9315"/>
    <lineage>
        <taxon>Eukaryota</taxon>
        <taxon>Metazoa</taxon>
        <taxon>Chordata</taxon>
        <taxon>Craniata</taxon>
        <taxon>Vertebrata</taxon>
        <taxon>Euteleostomi</taxon>
        <taxon>Mammalia</taxon>
        <taxon>Metatheria</taxon>
        <taxon>Diprotodontia</taxon>
        <taxon>Macropodidae</taxon>
        <taxon>Notamacropus</taxon>
    </lineage>
</organism>
<evidence type="ECO:0000250" key="1"/>
<evidence type="ECO:0000250" key="2">
    <source>
        <dbReference type="UniProtKB" id="P01009"/>
    </source>
</evidence>
<evidence type="ECO:0000269" key="3">
    <source>
    </source>
</evidence>
<evidence type="ECO:0000305" key="4"/>
<protein>
    <recommendedName>
        <fullName>Alpha-1-antiproteinase</fullName>
    </recommendedName>
    <alternativeName>
        <fullName>Alpha-1-antitrypsin</fullName>
    </alternativeName>
    <alternativeName>
        <fullName>Alpha-1-proteinase inhibitor</fullName>
    </alternativeName>
</protein>
<accession>P38027</accession>